<feature type="initiator methionine" description="Removed" evidence="2">
    <location>
        <position position="1"/>
    </location>
</feature>
<feature type="chain" id="PRO_0000439387" description="Hypersensitive-induced response protein-like protein 1">
    <location>
        <begin position="2"/>
        <end position="288"/>
    </location>
</feature>
<feature type="lipid moiety-binding region" description="N-myristoyl glycine" evidence="2">
    <location>
        <position position="2"/>
    </location>
</feature>
<dbReference type="EMBL" id="AC130728">
    <property type="protein sequence ID" value="AAT44297.1"/>
    <property type="molecule type" value="Genomic_DNA"/>
</dbReference>
<dbReference type="EMBL" id="AP008211">
    <property type="protein sequence ID" value="BAF18406.1"/>
    <property type="molecule type" value="Genomic_DNA"/>
</dbReference>
<dbReference type="EMBL" id="AP014961">
    <property type="protein sequence ID" value="BAS95629.1"/>
    <property type="molecule type" value="Genomic_DNA"/>
</dbReference>
<dbReference type="EMBL" id="CM000142">
    <property type="protein sequence ID" value="EEE64893.1"/>
    <property type="molecule type" value="Genomic_DNA"/>
</dbReference>
<dbReference type="EMBL" id="AK072258">
    <property type="protein sequence ID" value="BAG92895.1"/>
    <property type="molecule type" value="mRNA"/>
</dbReference>
<dbReference type="EMBL" id="AK104358">
    <property type="protein sequence ID" value="BAG96620.1"/>
    <property type="molecule type" value="mRNA"/>
</dbReference>
<dbReference type="EMBL" id="AK104515">
    <property type="protein sequence ID" value="BAG96745.1"/>
    <property type="molecule type" value="mRNA"/>
</dbReference>
<dbReference type="EMBL" id="AK111545">
    <property type="protein sequence ID" value="BAG99299.1"/>
    <property type="molecule type" value="mRNA"/>
</dbReference>
<dbReference type="EMBL" id="AK111965">
    <property type="protein sequence ID" value="BAG99490.1"/>
    <property type="molecule type" value="mRNA"/>
</dbReference>
<dbReference type="RefSeq" id="NP_001389579.1">
    <property type="nucleotide sequence ID" value="NM_001402650.1"/>
</dbReference>
<dbReference type="RefSeq" id="NP_001389580.1">
    <property type="nucleotide sequence ID" value="NM_001402651.1"/>
</dbReference>
<dbReference type="RefSeq" id="NP_001389581.1">
    <property type="nucleotide sequence ID" value="NM_001402652.1"/>
</dbReference>
<dbReference type="RefSeq" id="XP_015639526.1">
    <property type="nucleotide sequence ID" value="XM_015784040.1"/>
</dbReference>
<dbReference type="RefSeq" id="XP_015639527.1">
    <property type="nucleotide sequence ID" value="XM_015784041.1"/>
</dbReference>
<dbReference type="RefSeq" id="XP_015639528.1">
    <property type="nucleotide sequence ID" value="XM_015784042.1"/>
</dbReference>
<dbReference type="RefSeq" id="XP_066166388.1">
    <property type="nucleotide sequence ID" value="XM_066310291.1"/>
</dbReference>
<dbReference type="SMR" id="Q6L4S3"/>
<dbReference type="FunCoup" id="Q6L4S3">
    <property type="interactions" value="100"/>
</dbReference>
<dbReference type="STRING" id="39947.Q6L4S3"/>
<dbReference type="PaxDb" id="39947-Q6L4S3"/>
<dbReference type="EnsemblPlants" id="Os05t0591900-03">
    <property type="protein sequence ID" value="Os05t0591900-03"/>
    <property type="gene ID" value="Os05g0591900"/>
</dbReference>
<dbReference type="EnsemblPlants" id="Os05t0591900-04">
    <property type="protein sequence ID" value="Os05t0591900-04"/>
    <property type="gene ID" value="Os05g0591900"/>
</dbReference>
<dbReference type="EnsemblPlants" id="Os05t0591900-05">
    <property type="protein sequence ID" value="Os05t0591900-05"/>
    <property type="gene ID" value="Os05g0591900"/>
</dbReference>
<dbReference type="EnsemblPlants" id="Os05t0591900-07">
    <property type="protein sequence ID" value="Os05t0591900-07"/>
    <property type="gene ID" value="Os05g0591900"/>
</dbReference>
<dbReference type="GeneID" id="4339791"/>
<dbReference type="Gramene" id="Os05t0591900-03">
    <property type="protein sequence ID" value="Os05t0591900-03"/>
    <property type="gene ID" value="Os05g0591900"/>
</dbReference>
<dbReference type="Gramene" id="Os05t0591900-04">
    <property type="protein sequence ID" value="Os05t0591900-04"/>
    <property type="gene ID" value="Os05g0591900"/>
</dbReference>
<dbReference type="Gramene" id="Os05t0591900-05">
    <property type="protein sequence ID" value="Os05t0591900-05"/>
    <property type="gene ID" value="Os05g0591900"/>
</dbReference>
<dbReference type="Gramene" id="Os05t0591900-07">
    <property type="protein sequence ID" value="Os05t0591900-07"/>
    <property type="gene ID" value="Os05g0591900"/>
</dbReference>
<dbReference type="KEGG" id="dosa:Os05g0591900"/>
<dbReference type="eggNOG" id="KOG2620">
    <property type="taxonomic scope" value="Eukaryota"/>
</dbReference>
<dbReference type="InParanoid" id="Q6L4S3"/>
<dbReference type="OMA" id="AFYRFSN"/>
<dbReference type="OrthoDB" id="434619at2759"/>
<dbReference type="Proteomes" id="UP000000763">
    <property type="component" value="Chromosome 5"/>
</dbReference>
<dbReference type="Proteomes" id="UP000007752">
    <property type="component" value="Chromosome 5"/>
</dbReference>
<dbReference type="Proteomes" id="UP000059680">
    <property type="component" value="Chromosome 5"/>
</dbReference>
<dbReference type="ExpressionAtlas" id="Q6L4S3">
    <property type="expression patterns" value="baseline and differential"/>
</dbReference>
<dbReference type="CDD" id="cd03407">
    <property type="entry name" value="SPFH_like_u4"/>
    <property type="match status" value="1"/>
</dbReference>
<dbReference type="FunFam" id="3.30.479.30:FF:000013">
    <property type="entry name" value="Hypersensitive-induced response protein 1"/>
    <property type="match status" value="1"/>
</dbReference>
<dbReference type="Gene3D" id="3.30.479.30">
    <property type="entry name" value="Band 7 domain"/>
    <property type="match status" value="1"/>
</dbReference>
<dbReference type="InterPro" id="IPR050710">
    <property type="entry name" value="Band7/mec-2_domain"/>
</dbReference>
<dbReference type="InterPro" id="IPR001107">
    <property type="entry name" value="Band_7"/>
</dbReference>
<dbReference type="InterPro" id="IPR036013">
    <property type="entry name" value="Band_7/SPFH_dom_sf"/>
</dbReference>
<dbReference type="PANTHER" id="PTHR43327">
    <property type="entry name" value="STOMATIN-LIKE PROTEIN 2, MITOCHONDRIAL"/>
    <property type="match status" value="1"/>
</dbReference>
<dbReference type="PANTHER" id="PTHR43327:SF10">
    <property type="entry name" value="STOMATIN-LIKE PROTEIN 2, MITOCHONDRIAL"/>
    <property type="match status" value="1"/>
</dbReference>
<dbReference type="Pfam" id="PF01145">
    <property type="entry name" value="Band_7"/>
    <property type="match status" value="1"/>
</dbReference>
<dbReference type="SMART" id="SM00244">
    <property type="entry name" value="PHB"/>
    <property type="match status" value="1"/>
</dbReference>
<dbReference type="SUPFAM" id="SSF117892">
    <property type="entry name" value="Band 7/SPFH domain"/>
    <property type="match status" value="1"/>
</dbReference>
<accession>Q6L4S3</accession>
<comment type="function">
    <text evidence="1">Positive regulator of hypersensitive response (HR)-like cell death. May be involved in potassium ion channel regulation.</text>
</comment>
<reference key="1">
    <citation type="journal article" date="2005" name="Nature">
        <title>The map-based sequence of the rice genome.</title>
        <authorList>
            <consortium name="International rice genome sequencing project (IRGSP)"/>
        </authorList>
    </citation>
    <scope>NUCLEOTIDE SEQUENCE [LARGE SCALE GENOMIC DNA]</scope>
    <source>
        <strain>cv. Nipponbare</strain>
    </source>
</reference>
<reference key="2">
    <citation type="journal article" date="2008" name="Nucleic Acids Res.">
        <title>The rice annotation project database (RAP-DB): 2008 update.</title>
        <authorList>
            <consortium name="The rice annotation project (RAP)"/>
        </authorList>
    </citation>
    <scope>GENOME REANNOTATION</scope>
    <source>
        <strain>cv. Nipponbare</strain>
    </source>
</reference>
<reference key="3">
    <citation type="journal article" date="2013" name="Rice">
        <title>Improvement of the Oryza sativa Nipponbare reference genome using next generation sequence and optical map data.</title>
        <authorList>
            <person name="Kawahara Y."/>
            <person name="de la Bastide M."/>
            <person name="Hamilton J.P."/>
            <person name="Kanamori H."/>
            <person name="McCombie W.R."/>
            <person name="Ouyang S."/>
            <person name="Schwartz D.C."/>
            <person name="Tanaka T."/>
            <person name="Wu J."/>
            <person name="Zhou S."/>
            <person name="Childs K.L."/>
            <person name="Davidson R.M."/>
            <person name="Lin H."/>
            <person name="Quesada-Ocampo L."/>
            <person name="Vaillancourt B."/>
            <person name="Sakai H."/>
            <person name="Lee S.S."/>
            <person name="Kim J."/>
            <person name="Numa H."/>
            <person name="Itoh T."/>
            <person name="Buell C.R."/>
            <person name="Matsumoto T."/>
        </authorList>
    </citation>
    <scope>GENOME REANNOTATION</scope>
    <source>
        <strain>cv. Nipponbare</strain>
    </source>
</reference>
<reference key="4">
    <citation type="journal article" date="2005" name="PLoS Biol.">
        <title>The genomes of Oryza sativa: a history of duplications.</title>
        <authorList>
            <person name="Yu J."/>
            <person name="Wang J."/>
            <person name="Lin W."/>
            <person name="Li S."/>
            <person name="Li H."/>
            <person name="Zhou J."/>
            <person name="Ni P."/>
            <person name="Dong W."/>
            <person name="Hu S."/>
            <person name="Zeng C."/>
            <person name="Zhang J."/>
            <person name="Zhang Y."/>
            <person name="Li R."/>
            <person name="Xu Z."/>
            <person name="Li S."/>
            <person name="Li X."/>
            <person name="Zheng H."/>
            <person name="Cong L."/>
            <person name="Lin L."/>
            <person name="Yin J."/>
            <person name="Geng J."/>
            <person name="Li G."/>
            <person name="Shi J."/>
            <person name="Liu J."/>
            <person name="Lv H."/>
            <person name="Li J."/>
            <person name="Wang J."/>
            <person name="Deng Y."/>
            <person name="Ran L."/>
            <person name="Shi X."/>
            <person name="Wang X."/>
            <person name="Wu Q."/>
            <person name="Li C."/>
            <person name="Ren X."/>
            <person name="Wang J."/>
            <person name="Wang X."/>
            <person name="Li D."/>
            <person name="Liu D."/>
            <person name="Zhang X."/>
            <person name="Ji Z."/>
            <person name="Zhao W."/>
            <person name="Sun Y."/>
            <person name="Zhang Z."/>
            <person name="Bao J."/>
            <person name="Han Y."/>
            <person name="Dong L."/>
            <person name="Ji J."/>
            <person name="Chen P."/>
            <person name="Wu S."/>
            <person name="Liu J."/>
            <person name="Xiao Y."/>
            <person name="Bu D."/>
            <person name="Tan J."/>
            <person name="Yang L."/>
            <person name="Ye C."/>
            <person name="Zhang J."/>
            <person name="Xu J."/>
            <person name="Zhou Y."/>
            <person name="Yu Y."/>
            <person name="Zhang B."/>
            <person name="Zhuang S."/>
            <person name="Wei H."/>
            <person name="Liu B."/>
            <person name="Lei M."/>
            <person name="Yu H."/>
            <person name="Li Y."/>
            <person name="Xu H."/>
            <person name="Wei S."/>
            <person name="He X."/>
            <person name="Fang L."/>
            <person name="Zhang Z."/>
            <person name="Zhang Y."/>
            <person name="Huang X."/>
            <person name="Su Z."/>
            <person name="Tong W."/>
            <person name="Li J."/>
            <person name="Tong Z."/>
            <person name="Li S."/>
            <person name="Ye J."/>
            <person name="Wang L."/>
            <person name="Fang L."/>
            <person name="Lei T."/>
            <person name="Chen C.-S."/>
            <person name="Chen H.-C."/>
            <person name="Xu Z."/>
            <person name="Li H."/>
            <person name="Huang H."/>
            <person name="Zhang F."/>
            <person name="Xu H."/>
            <person name="Li N."/>
            <person name="Zhao C."/>
            <person name="Li S."/>
            <person name="Dong L."/>
            <person name="Huang Y."/>
            <person name="Li L."/>
            <person name="Xi Y."/>
            <person name="Qi Q."/>
            <person name="Li W."/>
            <person name="Zhang B."/>
            <person name="Hu W."/>
            <person name="Zhang Y."/>
            <person name="Tian X."/>
            <person name="Jiao Y."/>
            <person name="Liang X."/>
            <person name="Jin J."/>
            <person name="Gao L."/>
            <person name="Zheng W."/>
            <person name="Hao B."/>
            <person name="Liu S.-M."/>
            <person name="Wang W."/>
            <person name="Yuan L."/>
            <person name="Cao M."/>
            <person name="McDermott J."/>
            <person name="Samudrala R."/>
            <person name="Wang J."/>
            <person name="Wong G.K.-S."/>
            <person name="Yang H."/>
        </authorList>
    </citation>
    <scope>NUCLEOTIDE SEQUENCE [LARGE SCALE GENOMIC DNA]</scope>
    <source>
        <strain>cv. Nipponbare</strain>
    </source>
</reference>
<reference key="5">
    <citation type="journal article" date="2003" name="Science">
        <title>Collection, mapping, and annotation of over 28,000 cDNA clones from japonica rice.</title>
        <authorList>
            <consortium name="The rice full-length cDNA consortium"/>
        </authorList>
    </citation>
    <scope>NUCLEOTIDE SEQUENCE [LARGE SCALE MRNA]</scope>
    <source>
        <strain>cv. Nipponbare</strain>
    </source>
</reference>
<sequence length="288" mass="31621">MGNLFCCVQVDQSTVAIREQFGKFDAVLEPGCHCLPWFAGKRIAGHLTLRLQQLDVRCETKTKDNVFVNVVASIQYRALAGKANDAFYKLSNTRSQIQAYVFDVIRASVPKLNLDDAFEQKNDIAKAVEDELEKAMSAYGFEIVQTLIVDIEPDEHVKRAMNEINAAARLRVAANEKAEAEKIVQIKRAEGEAEAKYLSGLGIARQRQAIVDGLRDSVLGFSVNVPGTTAKDVMDMVLITQYFDTMKEIGASSKASSVFIPHGPGAVRDIATQIRDGLLQGQATTTSH</sequence>
<gene>
    <name evidence="3" type="primary">HIRL1</name>
    <name evidence="5" type="ordered locus">Os05g0591900</name>
    <name evidence="7" type="ORF">OsJ_19752</name>
    <name evidence="6" type="ORF">OSNPB_050591900</name>
    <name evidence="4" type="ORF">P0663C08.5</name>
</gene>
<proteinExistence type="evidence at transcript level"/>
<name>HIRL1_ORYSJ</name>
<organism evidence="4">
    <name type="scientific">Oryza sativa subsp. japonica</name>
    <name type="common">Rice</name>
    <dbReference type="NCBI Taxonomy" id="39947"/>
    <lineage>
        <taxon>Eukaryota</taxon>
        <taxon>Viridiplantae</taxon>
        <taxon>Streptophyta</taxon>
        <taxon>Embryophyta</taxon>
        <taxon>Tracheophyta</taxon>
        <taxon>Spermatophyta</taxon>
        <taxon>Magnoliopsida</taxon>
        <taxon>Liliopsida</taxon>
        <taxon>Poales</taxon>
        <taxon>Poaceae</taxon>
        <taxon>BOP clade</taxon>
        <taxon>Oryzoideae</taxon>
        <taxon>Oryzeae</taxon>
        <taxon>Oryzinae</taxon>
        <taxon>Oryza</taxon>
        <taxon>Oryza sativa</taxon>
    </lineage>
</organism>
<evidence type="ECO:0000250" key="1">
    <source>
        <dbReference type="UniProtKB" id="Q5GI04"/>
    </source>
</evidence>
<evidence type="ECO:0000255" key="2"/>
<evidence type="ECO:0000305" key="3"/>
<evidence type="ECO:0000312" key="4">
    <source>
        <dbReference type="EMBL" id="AAT44297.1"/>
    </source>
</evidence>
<evidence type="ECO:0000312" key="5">
    <source>
        <dbReference type="EMBL" id="BAF18406.1"/>
    </source>
</evidence>
<evidence type="ECO:0000312" key="6">
    <source>
        <dbReference type="EMBL" id="BAS95629.1"/>
    </source>
</evidence>
<evidence type="ECO:0000312" key="7">
    <source>
        <dbReference type="EMBL" id="EEE64893.1"/>
    </source>
</evidence>
<keyword id="KW-0449">Lipoprotein</keyword>
<keyword id="KW-0519">Myristate</keyword>
<keyword id="KW-1185">Reference proteome</keyword>
<protein>
    <recommendedName>
        <fullName evidence="3">Hypersensitive-induced response protein-like protein 1</fullName>
    </recommendedName>
</protein>